<dbReference type="EMBL" id="AF193764">
    <property type="protein sequence ID" value="AAF06014.1"/>
    <property type="molecule type" value="Genomic_DNA"/>
</dbReference>
<dbReference type="EMBL" id="AL591688">
    <property type="protein sequence ID" value="CAC45302.1"/>
    <property type="molecule type" value="Genomic_DNA"/>
</dbReference>
<dbReference type="RefSeq" id="NP_384836.1">
    <property type="nucleotide sequence ID" value="NC_003047.1"/>
</dbReference>
<dbReference type="SMR" id="Q9R9M8"/>
<dbReference type="EnsemblBacteria" id="CAC45302">
    <property type="protein sequence ID" value="CAC45302"/>
    <property type="gene ID" value="SMc00785"/>
</dbReference>
<dbReference type="KEGG" id="sme:SMc00785"/>
<dbReference type="PATRIC" id="fig|266834.11.peg.2109"/>
<dbReference type="eggNOG" id="COG1959">
    <property type="taxonomic scope" value="Bacteria"/>
</dbReference>
<dbReference type="HOGENOM" id="CLU_107144_2_1_5"/>
<dbReference type="OrthoDB" id="9795923at2"/>
<dbReference type="Proteomes" id="UP000001976">
    <property type="component" value="Chromosome"/>
</dbReference>
<dbReference type="GO" id="GO:0005829">
    <property type="term" value="C:cytosol"/>
    <property type="evidence" value="ECO:0007669"/>
    <property type="project" value="TreeGrafter"/>
</dbReference>
<dbReference type="GO" id="GO:0051537">
    <property type="term" value="F:2 iron, 2 sulfur cluster binding"/>
    <property type="evidence" value="ECO:0007669"/>
    <property type="project" value="UniProtKB-KW"/>
</dbReference>
<dbReference type="GO" id="GO:0003677">
    <property type="term" value="F:DNA binding"/>
    <property type="evidence" value="ECO:0007669"/>
    <property type="project" value="UniProtKB-KW"/>
</dbReference>
<dbReference type="GO" id="GO:0003700">
    <property type="term" value="F:DNA-binding transcription factor activity"/>
    <property type="evidence" value="ECO:0007669"/>
    <property type="project" value="TreeGrafter"/>
</dbReference>
<dbReference type="GO" id="GO:0046872">
    <property type="term" value="F:metal ion binding"/>
    <property type="evidence" value="ECO:0007669"/>
    <property type="project" value="UniProtKB-KW"/>
</dbReference>
<dbReference type="Gene3D" id="1.10.10.10">
    <property type="entry name" value="Winged helix-like DNA-binding domain superfamily/Winged helix DNA-binding domain"/>
    <property type="match status" value="1"/>
</dbReference>
<dbReference type="InterPro" id="IPR030489">
    <property type="entry name" value="TR_Rrf2-type_CS"/>
</dbReference>
<dbReference type="InterPro" id="IPR000944">
    <property type="entry name" value="Tscrpt_reg_Rrf2"/>
</dbReference>
<dbReference type="InterPro" id="IPR036388">
    <property type="entry name" value="WH-like_DNA-bd_sf"/>
</dbReference>
<dbReference type="InterPro" id="IPR036390">
    <property type="entry name" value="WH_DNA-bd_sf"/>
</dbReference>
<dbReference type="NCBIfam" id="NF008886">
    <property type="entry name" value="PRK11920.1"/>
    <property type="match status" value="1"/>
</dbReference>
<dbReference type="NCBIfam" id="TIGR00738">
    <property type="entry name" value="rrf2_super"/>
    <property type="match status" value="1"/>
</dbReference>
<dbReference type="PANTHER" id="PTHR33221:SF4">
    <property type="entry name" value="HTH-TYPE TRANSCRIPTIONAL REPRESSOR NSRR"/>
    <property type="match status" value="1"/>
</dbReference>
<dbReference type="PANTHER" id="PTHR33221">
    <property type="entry name" value="WINGED HELIX-TURN-HELIX TRANSCRIPTIONAL REGULATOR, RRF2 FAMILY"/>
    <property type="match status" value="1"/>
</dbReference>
<dbReference type="Pfam" id="PF02082">
    <property type="entry name" value="Rrf2"/>
    <property type="match status" value="1"/>
</dbReference>
<dbReference type="SUPFAM" id="SSF46785">
    <property type="entry name" value="Winged helix' DNA-binding domain"/>
    <property type="match status" value="1"/>
</dbReference>
<dbReference type="PROSITE" id="PS01332">
    <property type="entry name" value="HTH_RRF2_1"/>
    <property type="match status" value="1"/>
</dbReference>
<dbReference type="PROSITE" id="PS51197">
    <property type="entry name" value="HTH_RRF2_2"/>
    <property type="match status" value="1"/>
</dbReference>
<accession>Q9R9M8</accession>
<proteinExistence type="inferred from homology"/>
<comment type="function">
    <text>Required for growth utilizing PHB cycle intermediates.</text>
</comment>
<comment type="cofactor">
    <cofactor evidence="1">
        <name>[2Fe-2S] cluster</name>
        <dbReference type="ChEBI" id="CHEBI:190135"/>
    </cofactor>
    <text evidence="1">Binds 1 [2Fe-2S] cluster.</text>
</comment>
<protein>
    <recommendedName>
        <fullName>Protein aau3</fullName>
    </recommendedName>
</protein>
<organism>
    <name type="scientific">Rhizobium meliloti (strain 1021)</name>
    <name type="common">Ensifer meliloti</name>
    <name type="synonym">Sinorhizobium meliloti</name>
    <dbReference type="NCBI Taxonomy" id="266834"/>
    <lineage>
        <taxon>Bacteria</taxon>
        <taxon>Pseudomonadati</taxon>
        <taxon>Pseudomonadota</taxon>
        <taxon>Alphaproteobacteria</taxon>
        <taxon>Hyphomicrobiales</taxon>
        <taxon>Rhizobiaceae</taxon>
        <taxon>Sinorhizobium/Ensifer group</taxon>
        <taxon>Sinorhizobium</taxon>
    </lineage>
</organism>
<evidence type="ECO:0000250" key="1"/>
<evidence type="ECO:0000255" key="2">
    <source>
        <dbReference type="PROSITE-ProRule" id="PRU00540"/>
    </source>
</evidence>
<evidence type="ECO:0000305" key="3"/>
<sequence>MRLTKQTNYAVRMLMYCAANGEKLSRIPEIARAYGVSELFLFKILQPLTRAGLVETVRGRNGGVRLPRPASEITLFDVVKVTEDSFAMAECFEAGEIDCPLVDSCGLNAALRKALNAFFEVLQGYTIDDLVKARPQINFLLGLEEPVRPQTSAA</sequence>
<gene>
    <name type="primary">aau3</name>
    <name type="ordered locus">R00730</name>
    <name type="ORF">SMc00785</name>
</gene>
<name>AAU3_RHIME</name>
<keyword id="KW-0001">2Fe-2S</keyword>
<keyword id="KW-0238">DNA-binding</keyword>
<keyword id="KW-0408">Iron</keyword>
<keyword id="KW-0411">Iron-sulfur</keyword>
<keyword id="KW-0479">Metal-binding</keyword>
<keyword id="KW-1185">Reference proteome</keyword>
<reference key="1">
    <citation type="journal article" date="2000" name="J. Bacteriol.">
        <title>Requirement for the enzymes acetoacetyl coenzyme A synthetase and poly-3-hydroxybutyrate (PHB) synthase for growth of Sinorhizobium meliloti on PHB cycle intermediates.</title>
        <authorList>
            <person name="Cai G.-Q."/>
            <person name="Driscoll B.T."/>
            <person name="Charles T.C."/>
        </authorList>
    </citation>
    <scope>NUCLEOTIDE SEQUENCE [GENOMIC DNA]</scope>
    <source>
        <strain>1021</strain>
    </source>
</reference>
<reference key="2">
    <citation type="journal article" date="2001" name="Proc. Natl. Acad. Sci. U.S.A.">
        <title>Analysis of the chromosome sequence of the legume symbiont Sinorhizobium meliloti strain 1021.</title>
        <authorList>
            <person name="Capela D."/>
            <person name="Barloy-Hubler F."/>
            <person name="Gouzy J."/>
            <person name="Bothe G."/>
            <person name="Ampe F."/>
            <person name="Batut J."/>
            <person name="Boistard P."/>
            <person name="Becker A."/>
            <person name="Boutry M."/>
            <person name="Cadieu E."/>
            <person name="Dreano S."/>
            <person name="Gloux S."/>
            <person name="Godrie T."/>
            <person name="Goffeau A."/>
            <person name="Kahn D."/>
            <person name="Kiss E."/>
            <person name="Lelaure V."/>
            <person name="Masuy D."/>
            <person name="Pohl T."/>
            <person name="Portetelle D."/>
            <person name="Puehler A."/>
            <person name="Purnelle B."/>
            <person name="Ramsperger U."/>
            <person name="Renard C."/>
            <person name="Thebault P."/>
            <person name="Vandenbol M."/>
            <person name="Weidner S."/>
            <person name="Galibert F."/>
        </authorList>
    </citation>
    <scope>NUCLEOTIDE SEQUENCE [LARGE SCALE GENOMIC DNA]</scope>
    <source>
        <strain>1021</strain>
    </source>
</reference>
<reference key="3">
    <citation type="journal article" date="2001" name="Science">
        <title>The composite genome of the legume symbiont Sinorhizobium meliloti.</title>
        <authorList>
            <person name="Galibert F."/>
            <person name="Finan T.M."/>
            <person name="Long S.R."/>
            <person name="Puehler A."/>
            <person name="Abola P."/>
            <person name="Ampe F."/>
            <person name="Barloy-Hubler F."/>
            <person name="Barnett M.J."/>
            <person name="Becker A."/>
            <person name="Boistard P."/>
            <person name="Bothe G."/>
            <person name="Boutry M."/>
            <person name="Bowser L."/>
            <person name="Buhrmester J."/>
            <person name="Cadieu E."/>
            <person name="Capela D."/>
            <person name="Chain P."/>
            <person name="Cowie A."/>
            <person name="Davis R.W."/>
            <person name="Dreano S."/>
            <person name="Federspiel N.A."/>
            <person name="Fisher R.F."/>
            <person name="Gloux S."/>
            <person name="Godrie T."/>
            <person name="Goffeau A."/>
            <person name="Golding B."/>
            <person name="Gouzy J."/>
            <person name="Gurjal M."/>
            <person name="Hernandez-Lucas I."/>
            <person name="Hong A."/>
            <person name="Huizar L."/>
            <person name="Hyman R.W."/>
            <person name="Jones T."/>
            <person name="Kahn D."/>
            <person name="Kahn M.L."/>
            <person name="Kalman S."/>
            <person name="Keating D.H."/>
            <person name="Kiss E."/>
            <person name="Komp C."/>
            <person name="Lelaure V."/>
            <person name="Masuy D."/>
            <person name="Palm C."/>
            <person name="Peck M.C."/>
            <person name="Pohl T.M."/>
            <person name="Portetelle D."/>
            <person name="Purnelle B."/>
            <person name="Ramsperger U."/>
            <person name="Surzycki R."/>
            <person name="Thebault P."/>
            <person name="Vandenbol M."/>
            <person name="Vorhoelter F.J."/>
            <person name="Weidner S."/>
            <person name="Wells D.H."/>
            <person name="Wong K."/>
            <person name="Yeh K.-C."/>
            <person name="Batut J."/>
        </authorList>
    </citation>
    <scope>NUCLEOTIDE SEQUENCE [LARGE SCALE GENOMIC DNA]</scope>
    <source>
        <strain>1021</strain>
    </source>
</reference>
<feature type="chain" id="PRO_0000036203" description="Protein aau3">
    <location>
        <begin position="1"/>
        <end position="154"/>
    </location>
</feature>
<feature type="domain" description="HTH rrf2-type" evidence="2">
    <location>
        <begin position="2"/>
        <end position="132"/>
    </location>
</feature>
<feature type="binding site" evidence="2">
    <location>
        <position position="91"/>
    </location>
    <ligand>
        <name>[2Fe-2S] cluster</name>
        <dbReference type="ChEBI" id="CHEBI:190135"/>
    </ligand>
</feature>
<feature type="binding site" evidence="2">
    <location>
        <position position="99"/>
    </location>
    <ligand>
        <name>[2Fe-2S] cluster</name>
        <dbReference type="ChEBI" id="CHEBI:190135"/>
    </ligand>
</feature>
<feature type="binding site" evidence="2">
    <location>
        <position position="105"/>
    </location>
    <ligand>
        <name>[2Fe-2S] cluster</name>
        <dbReference type="ChEBI" id="CHEBI:190135"/>
    </ligand>
</feature>
<feature type="sequence conflict" description="In Ref. 1; AAF06014." evidence="3" ref="1">
    <original>R</original>
    <variation>G</variation>
    <location>
        <position position="32"/>
    </location>
</feature>